<proteinExistence type="inferred from homology"/>
<dbReference type="EC" id="6.1.1.21" evidence="1"/>
<dbReference type="EMBL" id="CP000922">
    <property type="protein sequence ID" value="ACJ33109.1"/>
    <property type="molecule type" value="Genomic_DNA"/>
</dbReference>
<dbReference type="RefSeq" id="WP_012574411.1">
    <property type="nucleotide sequence ID" value="NC_011567.1"/>
</dbReference>
<dbReference type="SMR" id="B7GFR0"/>
<dbReference type="STRING" id="491915.Aflv_0730"/>
<dbReference type="GeneID" id="7036987"/>
<dbReference type="KEGG" id="afl:Aflv_0730"/>
<dbReference type="PATRIC" id="fig|491915.6.peg.746"/>
<dbReference type="eggNOG" id="COG0124">
    <property type="taxonomic scope" value="Bacteria"/>
</dbReference>
<dbReference type="HOGENOM" id="CLU_025113_1_1_9"/>
<dbReference type="Proteomes" id="UP000000742">
    <property type="component" value="Chromosome"/>
</dbReference>
<dbReference type="GO" id="GO:0005737">
    <property type="term" value="C:cytoplasm"/>
    <property type="evidence" value="ECO:0007669"/>
    <property type="project" value="UniProtKB-SubCell"/>
</dbReference>
<dbReference type="GO" id="GO:0005524">
    <property type="term" value="F:ATP binding"/>
    <property type="evidence" value="ECO:0007669"/>
    <property type="project" value="UniProtKB-UniRule"/>
</dbReference>
<dbReference type="GO" id="GO:0140096">
    <property type="term" value="F:catalytic activity, acting on a protein"/>
    <property type="evidence" value="ECO:0007669"/>
    <property type="project" value="UniProtKB-ARBA"/>
</dbReference>
<dbReference type="GO" id="GO:0004821">
    <property type="term" value="F:histidine-tRNA ligase activity"/>
    <property type="evidence" value="ECO:0007669"/>
    <property type="project" value="UniProtKB-UniRule"/>
</dbReference>
<dbReference type="GO" id="GO:0016740">
    <property type="term" value="F:transferase activity"/>
    <property type="evidence" value="ECO:0007669"/>
    <property type="project" value="UniProtKB-ARBA"/>
</dbReference>
<dbReference type="GO" id="GO:0006427">
    <property type="term" value="P:histidyl-tRNA aminoacylation"/>
    <property type="evidence" value="ECO:0007669"/>
    <property type="project" value="UniProtKB-UniRule"/>
</dbReference>
<dbReference type="CDD" id="cd00773">
    <property type="entry name" value="HisRS-like_core"/>
    <property type="match status" value="1"/>
</dbReference>
<dbReference type="CDD" id="cd00859">
    <property type="entry name" value="HisRS_anticodon"/>
    <property type="match status" value="1"/>
</dbReference>
<dbReference type="FunFam" id="3.30.930.10:FF:000005">
    <property type="entry name" value="Histidine--tRNA ligase"/>
    <property type="match status" value="1"/>
</dbReference>
<dbReference type="Gene3D" id="3.40.50.800">
    <property type="entry name" value="Anticodon-binding domain"/>
    <property type="match status" value="1"/>
</dbReference>
<dbReference type="Gene3D" id="3.30.930.10">
    <property type="entry name" value="Bira Bifunctional Protein, Domain 2"/>
    <property type="match status" value="1"/>
</dbReference>
<dbReference type="HAMAP" id="MF_00127">
    <property type="entry name" value="His_tRNA_synth"/>
    <property type="match status" value="1"/>
</dbReference>
<dbReference type="InterPro" id="IPR006195">
    <property type="entry name" value="aa-tRNA-synth_II"/>
</dbReference>
<dbReference type="InterPro" id="IPR045864">
    <property type="entry name" value="aa-tRNA-synth_II/BPL/LPL"/>
</dbReference>
<dbReference type="InterPro" id="IPR004154">
    <property type="entry name" value="Anticodon-bd"/>
</dbReference>
<dbReference type="InterPro" id="IPR036621">
    <property type="entry name" value="Anticodon-bd_dom_sf"/>
</dbReference>
<dbReference type="InterPro" id="IPR015807">
    <property type="entry name" value="His-tRNA-ligase"/>
</dbReference>
<dbReference type="InterPro" id="IPR041715">
    <property type="entry name" value="HisRS-like_core"/>
</dbReference>
<dbReference type="InterPro" id="IPR004516">
    <property type="entry name" value="HisRS/HisZ"/>
</dbReference>
<dbReference type="InterPro" id="IPR033656">
    <property type="entry name" value="HisRS_anticodon"/>
</dbReference>
<dbReference type="NCBIfam" id="TIGR00442">
    <property type="entry name" value="hisS"/>
    <property type="match status" value="1"/>
</dbReference>
<dbReference type="PANTHER" id="PTHR43707:SF1">
    <property type="entry name" value="HISTIDINE--TRNA LIGASE, MITOCHONDRIAL-RELATED"/>
    <property type="match status" value="1"/>
</dbReference>
<dbReference type="PANTHER" id="PTHR43707">
    <property type="entry name" value="HISTIDYL-TRNA SYNTHETASE"/>
    <property type="match status" value="1"/>
</dbReference>
<dbReference type="Pfam" id="PF03129">
    <property type="entry name" value="HGTP_anticodon"/>
    <property type="match status" value="1"/>
</dbReference>
<dbReference type="Pfam" id="PF13393">
    <property type="entry name" value="tRNA-synt_His"/>
    <property type="match status" value="1"/>
</dbReference>
<dbReference type="PIRSF" id="PIRSF001549">
    <property type="entry name" value="His-tRNA_synth"/>
    <property type="match status" value="1"/>
</dbReference>
<dbReference type="SUPFAM" id="SSF52954">
    <property type="entry name" value="Class II aaRS ABD-related"/>
    <property type="match status" value="1"/>
</dbReference>
<dbReference type="SUPFAM" id="SSF55681">
    <property type="entry name" value="Class II aaRS and biotin synthetases"/>
    <property type="match status" value="1"/>
</dbReference>
<dbReference type="PROSITE" id="PS50862">
    <property type="entry name" value="AA_TRNA_LIGASE_II"/>
    <property type="match status" value="1"/>
</dbReference>
<name>SYH_ANOFW</name>
<feature type="chain" id="PRO_1000199113" description="Histidine--tRNA ligase">
    <location>
        <begin position="1"/>
        <end position="423"/>
    </location>
</feature>
<reference key="1">
    <citation type="journal article" date="2008" name="Genome Biol.">
        <title>Encapsulated in silica: genome, proteome and physiology of the thermophilic bacterium Anoxybacillus flavithermus WK1.</title>
        <authorList>
            <person name="Saw J.H."/>
            <person name="Mountain B.W."/>
            <person name="Feng L."/>
            <person name="Omelchenko M.V."/>
            <person name="Hou S."/>
            <person name="Saito J.A."/>
            <person name="Stott M.B."/>
            <person name="Li D."/>
            <person name="Zhao G."/>
            <person name="Wu J."/>
            <person name="Galperin M.Y."/>
            <person name="Koonin E.V."/>
            <person name="Makarova K.S."/>
            <person name="Wolf Y.I."/>
            <person name="Rigden D.J."/>
            <person name="Dunfield P.F."/>
            <person name="Wang L."/>
            <person name="Alam M."/>
        </authorList>
    </citation>
    <scope>NUCLEOTIDE SEQUENCE [LARGE SCALE GENOMIC DNA]</scope>
    <source>
        <strain>DSM 21510 / WK1</strain>
    </source>
</reference>
<accession>B7GFR0</accession>
<sequence>MSFQIPRGTQDILPEQAAKWQYIEHIARELCRRYNYQEIRTPIFEHTELFLRGVGDTTDIVQKEMYTFEDRGGRSLTLRPEGTAAVVRSFVENKMYGDPNQPVKLYYMGPMFRYERPQAGRFRQFVQFGVEALGSNDPAIDAEVIALAMDIYRMLGLKKLKLVINSLGDVESRKAHRQALIDHFQPRIHEFCDDCQARLHKNPMRILDCKKDRDHELMRTAPSILDYLNEQSRTYFEKVQMYLQKLGIAFEVDSRLVRGLDYYNHTAFEIMSEAEGFGAITTLCGGGRYNGLVQEIGGPETPGIGFALSIERLLAALEAEGISLPISEGIDCYVVALGEQAKEEAVALVAALRKEGISAEKDYQDRKVKAQLKAADRLHATYVAILGEDELQKGVINVKHMATGEQQEVSLHTFISHMKHVLQ</sequence>
<organism>
    <name type="scientific">Anoxybacillus flavithermus (strain DSM 21510 / WK1)</name>
    <dbReference type="NCBI Taxonomy" id="491915"/>
    <lineage>
        <taxon>Bacteria</taxon>
        <taxon>Bacillati</taxon>
        <taxon>Bacillota</taxon>
        <taxon>Bacilli</taxon>
        <taxon>Bacillales</taxon>
        <taxon>Anoxybacillaceae</taxon>
        <taxon>Anoxybacillus</taxon>
    </lineage>
</organism>
<evidence type="ECO:0000255" key="1">
    <source>
        <dbReference type="HAMAP-Rule" id="MF_00127"/>
    </source>
</evidence>
<comment type="catalytic activity">
    <reaction evidence="1">
        <text>tRNA(His) + L-histidine + ATP = L-histidyl-tRNA(His) + AMP + diphosphate + H(+)</text>
        <dbReference type="Rhea" id="RHEA:17313"/>
        <dbReference type="Rhea" id="RHEA-COMP:9665"/>
        <dbReference type="Rhea" id="RHEA-COMP:9689"/>
        <dbReference type="ChEBI" id="CHEBI:15378"/>
        <dbReference type="ChEBI" id="CHEBI:30616"/>
        <dbReference type="ChEBI" id="CHEBI:33019"/>
        <dbReference type="ChEBI" id="CHEBI:57595"/>
        <dbReference type="ChEBI" id="CHEBI:78442"/>
        <dbReference type="ChEBI" id="CHEBI:78527"/>
        <dbReference type="ChEBI" id="CHEBI:456215"/>
        <dbReference type="EC" id="6.1.1.21"/>
    </reaction>
</comment>
<comment type="subunit">
    <text evidence="1">Homodimer.</text>
</comment>
<comment type="subcellular location">
    <subcellularLocation>
        <location evidence="1">Cytoplasm</location>
    </subcellularLocation>
</comment>
<comment type="similarity">
    <text evidence="1">Belongs to the class-II aminoacyl-tRNA synthetase family.</text>
</comment>
<gene>
    <name evidence="1" type="primary">hisS</name>
    <name type="ordered locus">Aflv_0730</name>
</gene>
<protein>
    <recommendedName>
        <fullName evidence="1">Histidine--tRNA ligase</fullName>
        <ecNumber evidence="1">6.1.1.21</ecNumber>
    </recommendedName>
    <alternativeName>
        <fullName evidence="1">Histidyl-tRNA synthetase</fullName>
        <shortName evidence="1">HisRS</shortName>
    </alternativeName>
</protein>
<keyword id="KW-0030">Aminoacyl-tRNA synthetase</keyword>
<keyword id="KW-0067">ATP-binding</keyword>
<keyword id="KW-0963">Cytoplasm</keyword>
<keyword id="KW-0436">Ligase</keyword>
<keyword id="KW-0547">Nucleotide-binding</keyword>
<keyword id="KW-0648">Protein biosynthesis</keyword>